<comment type="function">
    <text evidence="1">Catalyzes the methylthiolation of an aspartic acid residue of ribosomal protein uS12.</text>
</comment>
<comment type="catalytic activity">
    <reaction evidence="1">
        <text>L-aspartate(89)-[ribosomal protein uS12]-hydrogen + (sulfur carrier)-SH + AH2 + 2 S-adenosyl-L-methionine = 3-methylsulfanyl-L-aspartate(89)-[ribosomal protein uS12]-hydrogen + (sulfur carrier)-H + 5'-deoxyadenosine + L-methionine + A + S-adenosyl-L-homocysteine + 2 H(+)</text>
        <dbReference type="Rhea" id="RHEA:37087"/>
        <dbReference type="Rhea" id="RHEA-COMP:10460"/>
        <dbReference type="Rhea" id="RHEA-COMP:10461"/>
        <dbReference type="Rhea" id="RHEA-COMP:14737"/>
        <dbReference type="Rhea" id="RHEA-COMP:14739"/>
        <dbReference type="ChEBI" id="CHEBI:13193"/>
        <dbReference type="ChEBI" id="CHEBI:15378"/>
        <dbReference type="ChEBI" id="CHEBI:17319"/>
        <dbReference type="ChEBI" id="CHEBI:17499"/>
        <dbReference type="ChEBI" id="CHEBI:29917"/>
        <dbReference type="ChEBI" id="CHEBI:29961"/>
        <dbReference type="ChEBI" id="CHEBI:57844"/>
        <dbReference type="ChEBI" id="CHEBI:57856"/>
        <dbReference type="ChEBI" id="CHEBI:59789"/>
        <dbReference type="ChEBI" id="CHEBI:64428"/>
        <dbReference type="ChEBI" id="CHEBI:73599"/>
        <dbReference type="EC" id="2.8.4.4"/>
    </reaction>
</comment>
<comment type="cofactor">
    <cofactor evidence="1">
        <name>[4Fe-4S] cluster</name>
        <dbReference type="ChEBI" id="CHEBI:49883"/>
    </cofactor>
    <text evidence="1">Binds 2 [4Fe-4S] clusters. One cluster is coordinated with 3 cysteines and an exchangeable S-adenosyl-L-methionine.</text>
</comment>
<comment type="subcellular location">
    <subcellularLocation>
        <location evidence="1">Cytoplasm</location>
    </subcellularLocation>
</comment>
<comment type="similarity">
    <text evidence="1">Belongs to the methylthiotransferase family. RimO subfamily.</text>
</comment>
<keyword id="KW-0004">4Fe-4S</keyword>
<keyword id="KW-0963">Cytoplasm</keyword>
<keyword id="KW-0408">Iron</keyword>
<keyword id="KW-0411">Iron-sulfur</keyword>
<keyword id="KW-0479">Metal-binding</keyword>
<keyword id="KW-1185">Reference proteome</keyword>
<keyword id="KW-0949">S-adenosyl-L-methionine</keyword>
<keyword id="KW-0808">Transferase</keyword>
<gene>
    <name evidence="1" type="primary">rimO</name>
    <name type="ordered locus">Cpha266_1760</name>
</gene>
<reference key="1">
    <citation type="submission" date="2006-12" db="EMBL/GenBank/DDBJ databases">
        <title>Complete sequence of Chlorobium phaeobacteroides DSM 266.</title>
        <authorList>
            <consortium name="US DOE Joint Genome Institute"/>
            <person name="Copeland A."/>
            <person name="Lucas S."/>
            <person name="Lapidus A."/>
            <person name="Barry K."/>
            <person name="Detter J.C."/>
            <person name="Glavina del Rio T."/>
            <person name="Hammon N."/>
            <person name="Israni S."/>
            <person name="Pitluck S."/>
            <person name="Goltsman E."/>
            <person name="Schmutz J."/>
            <person name="Larimer F."/>
            <person name="Land M."/>
            <person name="Hauser L."/>
            <person name="Mikhailova N."/>
            <person name="Li T."/>
            <person name="Overmann J."/>
            <person name="Bryant D.A."/>
            <person name="Richardson P."/>
        </authorList>
    </citation>
    <scope>NUCLEOTIDE SEQUENCE [LARGE SCALE GENOMIC DNA]</scope>
    <source>
        <strain>DSM 266 / SMG 266 / 2430</strain>
    </source>
</reference>
<proteinExistence type="inferred from homology"/>
<sequence length="432" mass="49092">MKKHNVFLLSLGCSKNTVDSERLMAQAEASGITFTEEADLADTILINTCGFIEDAKEESIAEILAAVEKKTQGIVSGVYVMGCLSELYRTEMREELPEIDGFFGTRELPALLQAIGAQYRDELYDHRSLLTPPHISYLKIAEGCNRSCSFCSIPKIRGRYRSQPMEQLLREAALLQKKGVRELNLIAQDTSIYGRDLYGTPMLRELLVRLSDMEFRWIRLLYAYPLDFPLEVITAMSERKNICNYLDLPLQHCNDRILRSMNRGITKTETVRLLDTIRAANPDIRLRTTMLVGFPGETRAEFDELMQFIETMRFDRLGCFPYCHEEHAPSYALEDTVKAEEKEERRAELMELQETIAKENNQLFEGKELTVLIDQIEGDIAIARTEYDAPEVDNECYLTTGSLRVGTGEFCTAHISESSAYELHGTITAVNG</sequence>
<organism>
    <name type="scientific">Chlorobium phaeobacteroides (strain DSM 266 / SMG 266 / 2430)</name>
    <dbReference type="NCBI Taxonomy" id="290317"/>
    <lineage>
        <taxon>Bacteria</taxon>
        <taxon>Pseudomonadati</taxon>
        <taxon>Chlorobiota</taxon>
        <taxon>Chlorobiia</taxon>
        <taxon>Chlorobiales</taxon>
        <taxon>Chlorobiaceae</taxon>
        <taxon>Chlorobium/Pelodictyon group</taxon>
        <taxon>Chlorobium</taxon>
    </lineage>
</organism>
<dbReference type="EC" id="2.8.4.4" evidence="1"/>
<dbReference type="EMBL" id="CP000492">
    <property type="protein sequence ID" value="ABL65777.1"/>
    <property type="molecule type" value="Genomic_DNA"/>
</dbReference>
<dbReference type="RefSeq" id="WP_011745584.1">
    <property type="nucleotide sequence ID" value="NC_008639.1"/>
</dbReference>
<dbReference type="SMR" id="A1BHA0"/>
<dbReference type="STRING" id="290317.Cpha266_1760"/>
<dbReference type="KEGG" id="cph:Cpha266_1760"/>
<dbReference type="eggNOG" id="COG0621">
    <property type="taxonomic scope" value="Bacteria"/>
</dbReference>
<dbReference type="HOGENOM" id="CLU_018697_0_1_10"/>
<dbReference type="OrthoDB" id="9805215at2"/>
<dbReference type="Proteomes" id="UP000008701">
    <property type="component" value="Chromosome"/>
</dbReference>
<dbReference type="GO" id="GO:0005829">
    <property type="term" value="C:cytosol"/>
    <property type="evidence" value="ECO:0007669"/>
    <property type="project" value="TreeGrafter"/>
</dbReference>
<dbReference type="GO" id="GO:0051539">
    <property type="term" value="F:4 iron, 4 sulfur cluster binding"/>
    <property type="evidence" value="ECO:0007669"/>
    <property type="project" value="UniProtKB-UniRule"/>
</dbReference>
<dbReference type="GO" id="GO:0035599">
    <property type="term" value="F:aspartic acid methylthiotransferase activity"/>
    <property type="evidence" value="ECO:0007669"/>
    <property type="project" value="TreeGrafter"/>
</dbReference>
<dbReference type="GO" id="GO:0046872">
    <property type="term" value="F:metal ion binding"/>
    <property type="evidence" value="ECO:0007669"/>
    <property type="project" value="UniProtKB-KW"/>
</dbReference>
<dbReference type="GO" id="GO:0103039">
    <property type="term" value="F:protein methylthiotransferase activity"/>
    <property type="evidence" value="ECO:0007669"/>
    <property type="project" value="UniProtKB-EC"/>
</dbReference>
<dbReference type="GO" id="GO:0006400">
    <property type="term" value="P:tRNA modification"/>
    <property type="evidence" value="ECO:0007669"/>
    <property type="project" value="InterPro"/>
</dbReference>
<dbReference type="CDD" id="cd01335">
    <property type="entry name" value="Radical_SAM"/>
    <property type="match status" value="1"/>
</dbReference>
<dbReference type="FunFam" id="3.80.30.20:FF:000001">
    <property type="entry name" value="tRNA-2-methylthio-N(6)-dimethylallyladenosine synthase 2"/>
    <property type="match status" value="1"/>
</dbReference>
<dbReference type="Gene3D" id="3.40.50.12160">
    <property type="entry name" value="Methylthiotransferase, N-terminal domain"/>
    <property type="match status" value="1"/>
</dbReference>
<dbReference type="Gene3D" id="2.40.50.140">
    <property type="entry name" value="Nucleic acid-binding proteins"/>
    <property type="match status" value="1"/>
</dbReference>
<dbReference type="Gene3D" id="3.80.30.20">
    <property type="entry name" value="tm_1862 like domain"/>
    <property type="match status" value="1"/>
</dbReference>
<dbReference type="HAMAP" id="MF_01865">
    <property type="entry name" value="MTTase_RimO"/>
    <property type="match status" value="1"/>
</dbReference>
<dbReference type="InterPro" id="IPR006638">
    <property type="entry name" value="Elp3/MiaA/NifB-like_rSAM"/>
</dbReference>
<dbReference type="InterPro" id="IPR005839">
    <property type="entry name" value="Methylthiotransferase"/>
</dbReference>
<dbReference type="InterPro" id="IPR020612">
    <property type="entry name" value="Methylthiotransferase_CS"/>
</dbReference>
<dbReference type="InterPro" id="IPR013848">
    <property type="entry name" value="Methylthiotransferase_N"/>
</dbReference>
<dbReference type="InterPro" id="IPR038135">
    <property type="entry name" value="Methylthiotransferase_N_sf"/>
</dbReference>
<dbReference type="InterPro" id="IPR012340">
    <property type="entry name" value="NA-bd_OB-fold"/>
</dbReference>
<dbReference type="InterPro" id="IPR005840">
    <property type="entry name" value="Ribosomal_uS12_MeSTrfase_RimO"/>
</dbReference>
<dbReference type="InterPro" id="IPR007197">
    <property type="entry name" value="rSAM"/>
</dbReference>
<dbReference type="InterPro" id="IPR023404">
    <property type="entry name" value="rSAM_horseshoe"/>
</dbReference>
<dbReference type="InterPro" id="IPR002792">
    <property type="entry name" value="TRAM_dom"/>
</dbReference>
<dbReference type="NCBIfam" id="TIGR01125">
    <property type="entry name" value="30S ribosomal protein S12 methylthiotransferase RimO"/>
    <property type="match status" value="1"/>
</dbReference>
<dbReference type="NCBIfam" id="TIGR00089">
    <property type="entry name" value="MiaB/RimO family radical SAM methylthiotransferase"/>
    <property type="match status" value="1"/>
</dbReference>
<dbReference type="PANTHER" id="PTHR43837">
    <property type="entry name" value="RIBOSOMAL PROTEIN S12 METHYLTHIOTRANSFERASE RIMO"/>
    <property type="match status" value="1"/>
</dbReference>
<dbReference type="PANTHER" id="PTHR43837:SF1">
    <property type="entry name" value="RIBOSOMAL PROTEIN US12 METHYLTHIOTRANSFERASE RIMO"/>
    <property type="match status" value="1"/>
</dbReference>
<dbReference type="Pfam" id="PF04055">
    <property type="entry name" value="Radical_SAM"/>
    <property type="match status" value="1"/>
</dbReference>
<dbReference type="Pfam" id="PF18693">
    <property type="entry name" value="TRAM_2"/>
    <property type="match status" value="1"/>
</dbReference>
<dbReference type="Pfam" id="PF00919">
    <property type="entry name" value="UPF0004"/>
    <property type="match status" value="1"/>
</dbReference>
<dbReference type="SFLD" id="SFLDG01082">
    <property type="entry name" value="B12-binding_domain_containing"/>
    <property type="match status" value="1"/>
</dbReference>
<dbReference type="SFLD" id="SFLDG01061">
    <property type="entry name" value="methylthiotransferase"/>
    <property type="match status" value="1"/>
</dbReference>
<dbReference type="SFLD" id="SFLDF00274">
    <property type="entry name" value="ribosomal_protein_S12_methylth"/>
    <property type="match status" value="1"/>
</dbReference>
<dbReference type="SMART" id="SM00729">
    <property type="entry name" value="Elp3"/>
    <property type="match status" value="1"/>
</dbReference>
<dbReference type="SUPFAM" id="SSF102114">
    <property type="entry name" value="Radical SAM enzymes"/>
    <property type="match status" value="1"/>
</dbReference>
<dbReference type="PROSITE" id="PS51449">
    <property type="entry name" value="MTTASE_N"/>
    <property type="match status" value="1"/>
</dbReference>
<dbReference type="PROSITE" id="PS01278">
    <property type="entry name" value="MTTASE_RADICAL"/>
    <property type="match status" value="1"/>
</dbReference>
<dbReference type="PROSITE" id="PS51918">
    <property type="entry name" value="RADICAL_SAM"/>
    <property type="match status" value="1"/>
</dbReference>
<accession>A1BHA0</accession>
<feature type="chain" id="PRO_0000374768" description="Ribosomal protein uS12 methylthiotransferase RimO">
    <location>
        <begin position="1"/>
        <end position="432"/>
    </location>
</feature>
<feature type="domain" description="MTTase N-terminal" evidence="1">
    <location>
        <begin position="4"/>
        <end position="120"/>
    </location>
</feature>
<feature type="domain" description="Radical SAM core" evidence="2">
    <location>
        <begin position="130"/>
        <end position="359"/>
    </location>
</feature>
<feature type="domain" description="TRAM" evidence="1">
    <location>
        <begin position="362"/>
        <end position="429"/>
    </location>
</feature>
<feature type="binding site" evidence="1">
    <location>
        <position position="13"/>
    </location>
    <ligand>
        <name>[4Fe-4S] cluster</name>
        <dbReference type="ChEBI" id="CHEBI:49883"/>
        <label>1</label>
    </ligand>
</feature>
<feature type="binding site" evidence="1">
    <location>
        <position position="49"/>
    </location>
    <ligand>
        <name>[4Fe-4S] cluster</name>
        <dbReference type="ChEBI" id="CHEBI:49883"/>
        <label>1</label>
    </ligand>
</feature>
<feature type="binding site" evidence="1">
    <location>
        <position position="83"/>
    </location>
    <ligand>
        <name>[4Fe-4S] cluster</name>
        <dbReference type="ChEBI" id="CHEBI:49883"/>
        <label>1</label>
    </ligand>
</feature>
<feature type="binding site" evidence="1">
    <location>
        <position position="144"/>
    </location>
    <ligand>
        <name>[4Fe-4S] cluster</name>
        <dbReference type="ChEBI" id="CHEBI:49883"/>
        <label>2</label>
        <note>4Fe-4S-S-AdoMet</note>
    </ligand>
</feature>
<feature type="binding site" evidence="1">
    <location>
        <position position="148"/>
    </location>
    <ligand>
        <name>[4Fe-4S] cluster</name>
        <dbReference type="ChEBI" id="CHEBI:49883"/>
        <label>2</label>
        <note>4Fe-4S-S-AdoMet</note>
    </ligand>
</feature>
<feature type="binding site" evidence="1">
    <location>
        <position position="151"/>
    </location>
    <ligand>
        <name>[4Fe-4S] cluster</name>
        <dbReference type="ChEBI" id="CHEBI:49883"/>
        <label>2</label>
        <note>4Fe-4S-S-AdoMet</note>
    </ligand>
</feature>
<evidence type="ECO:0000255" key="1">
    <source>
        <dbReference type="HAMAP-Rule" id="MF_01865"/>
    </source>
</evidence>
<evidence type="ECO:0000255" key="2">
    <source>
        <dbReference type="PROSITE-ProRule" id="PRU01266"/>
    </source>
</evidence>
<name>RIMO_CHLPD</name>
<protein>
    <recommendedName>
        <fullName evidence="1">Ribosomal protein uS12 methylthiotransferase RimO</fullName>
        <shortName evidence="1">uS12 MTTase</shortName>
        <shortName evidence="1">uS12 methylthiotransferase</shortName>
        <ecNumber evidence="1">2.8.4.4</ecNumber>
    </recommendedName>
    <alternativeName>
        <fullName evidence="1">Ribosomal protein uS12 (aspartate-C(3))-methylthiotransferase</fullName>
    </alternativeName>
    <alternativeName>
        <fullName evidence="1">Ribosome maturation factor RimO</fullName>
    </alternativeName>
</protein>